<organism>
    <name type="scientific">Thermodesulfovibrio yellowstonii (strain ATCC 51303 / DSM 11347 / YP87)</name>
    <dbReference type="NCBI Taxonomy" id="289376"/>
    <lineage>
        <taxon>Bacteria</taxon>
        <taxon>Pseudomonadati</taxon>
        <taxon>Nitrospirota</taxon>
        <taxon>Thermodesulfovibrionia</taxon>
        <taxon>Thermodesulfovibrionales</taxon>
        <taxon>Thermodesulfovibrionaceae</taxon>
        <taxon>Thermodesulfovibrio</taxon>
    </lineage>
</organism>
<evidence type="ECO:0000255" key="1">
    <source>
        <dbReference type="HAMAP-Rule" id="MF_00204"/>
    </source>
</evidence>
<keyword id="KW-0067">ATP-binding</keyword>
<keyword id="KW-0963">Cytoplasm</keyword>
<keyword id="KW-0227">DNA damage</keyword>
<keyword id="KW-0228">DNA excision</keyword>
<keyword id="KW-0234">DNA repair</keyword>
<keyword id="KW-0267">Excision nuclease</keyword>
<keyword id="KW-0347">Helicase</keyword>
<keyword id="KW-0378">Hydrolase</keyword>
<keyword id="KW-0547">Nucleotide-binding</keyword>
<keyword id="KW-1185">Reference proteome</keyword>
<keyword id="KW-0742">SOS response</keyword>
<feature type="chain" id="PRO_1000200559" description="UvrABC system protein B">
    <location>
        <begin position="1"/>
        <end position="671"/>
    </location>
</feature>
<feature type="domain" description="Helicase ATP-binding" evidence="1">
    <location>
        <begin position="25"/>
        <end position="178"/>
    </location>
</feature>
<feature type="domain" description="Helicase C-terminal" evidence="1">
    <location>
        <begin position="435"/>
        <end position="601"/>
    </location>
</feature>
<feature type="domain" description="UVR" evidence="1">
    <location>
        <begin position="626"/>
        <end position="661"/>
    </location>
</feature>
<feature type="short sequence motif" description="Beta-hairpin">
    <location>
        <begin position="91"/>
        <end position="114"/>
    </location>
</feature>
<feature type="binding site" evidence="1">
    <location>
        <begin position="38"/>
        <end position="45"/>
    </location>
    <ligand>
        <name>ATP</name>
        <dbReference type="ChEBI" id="CHEBI:30616"/>
    </ligand>
</feature>
<accession>B5YJW4</accession>
<protein>
    <recommendedName>
        <fullName evidence="1">UvrABC system protein B</fullName>
        <shortName evidence="1">Protein UvrB</shortName>
    </recommendedName>
    <alternativeName>
        <fullName evidence="1">Excinuclease ABC subunit B</fullName>
    </alternativeName>
</protein>
<comment type="function">
    <text evidence="1">The UvrABC repair system catalyzes the recognition and processing of DNA lesions. A damage recognition complex composed of 2 UvrA and 2 UvrB subunits scans DNA for abnormalities. Upon binding of the UvrA(2)B(2) complex to a putative damaged site, the DNA wraps around one UvrB monomer. DNA wrap is dependent on ATP binding by UvrB and probably causes local melting of the DNA helix, facilitating insertion of UvrB beta-hairpin between the DNA strands. Then UvrB probes one DNA strand for the presence of a lesion. If a lesion is found the UvrA subunits dissociate and the UvrB-DNA preincision complex is formed. This complex is subsequently bound by UvrC and the second UvrB is released. If no lesion is found, the DNA wraps around the other UvrB subunit that will check the other stand for damage.</text>
</comment>
<comment type="subunit">
    <text evidence="1">Forms a heterotetramer with UvrA during the search for lesions. Interacts with UvrC in an incision complex.</text>
</comment>
<comment type="subcellular location">
    <subcellularLocation>
        <location evidence="1">Cytoplasm</location>
    </subcellularLocation>
</comment>
<comment type="domain">
    <text evidence="1">The beta-hairpin motif is involved in DNA binding.</text>
</comment>
<comment type="similarity">
    <text evidence="1">Belongs to the UvrB family.</text>
</comment>
<reference key="1">
    <citation type="submission" date="2008-08" db="EMBL/GenBank/DDBJ databases">
        <title>The complete genome sequence of Thermodesulfovibrio yellowstonii strain ATCC 51303 / DSM 11347 / YP87.</title>
        <authorList>
            <person name="Dodson R.J."/>
            <person name="Durkin A.S."/>
            <person name="Wu M."/>
            <person name="Eisen J."/>
            <person name="Sutton G."/>
        </authorList>
    </citation>
    <scope>NUCLEOTIDE SEQUENCE [LARGE SCALE GENOMIC DNA]</scope>
    <source>
        <strain>ATCC 51303 / DSM 11347 / YP87</strain>
    </source>
</reference>
<sequence length="671" mass="77318">MGNFKIYTSFKPKGDQPKAIKQLVEGIKKGYKHQVLLGVTGSGKTFTIANVIEKVNKPTLVIAHNKTLAAQLYGELKELFPYNAVEYYVSYYDYYQPEAYIPETDTYIEKDALINDDIDRMRHSATLSVLTRQDVIVVASVSCIYGIGSPDDYMSMHVTLEEGMKTERDAMLKKLVEILYIRAEEEFRRGAFRVRGDVVDIFASHCLDKAYRVEFFDDEIDAIYEIDPLTGSRQKRLQRIFIPPNSHWVTPEPRLKKALETIEEELQERIKYFKERGEELFAERIEKRTRFDMELLSQFGHCHGIENYSRHLSGRLPGEPPFTLIDYIYAGPSKGDFLTVIDESHVTVPQIGGMYEGDRSRKQTLVEYGFRLPSALDNRPLTFKEFEHRMNYVIYVSATPGDYEIEKSGGRIVEQIIRPTGLVDPKIEVRPATNQVEDLLEEIHKRVSRGERVLVTTITKKMAEDLTDYYTTVGIKAKYLHSDIDTLERVEILKDLRLGKFDVLIGVNLLREGLDLPEVSLVAIFDADKEGFLRSERSLIQTAGRASRNINGTVIFYADTVTDSMKKAIEETERRREIQMKYNKKNGISPETVKSKIKDILSSIYEKDYVTVDVVKEEAEEYELNEETIKKLEQEMKHAAENLEFEKAAEIRDKIFKIKEKMLKLGMKLTV</sequence>
<gene>
    <name evidence="1" type="primary">uvrB</name>
    <name type="ordered locus">THEYE_A0687</name>
</gene>
<dbReference type="EMBL" id="CP001147">
    <property type="protein sequence ID" value="ACI21236.1"/>
    <property type="molecule type" value="Genomic_DNA"/>
</dbReference>
<dbReference type="RefSeq" id="WP_012545956.1">
    <property type="nucleotide sequence ID" value="NC_011296.1"/>
</dbReference>
<dbReference type="RefSeq" id="YP_002248529.1">
    <property type="nucleotide sequence ID" value="NC_011296.1"/>
</dbReference>
<dbReference type="SMR" id="B5YJW4"/>
<dbReference type="FunCoup" id="B5YJW4">
    <property type="interactions" value="172"/>
</dbReference>
<dbReference type="STRING" id="289376.THEYE_A0687"/>
<dbReference type="EnsemblBacteria" id="ACI21236">
    <property type="protein sequence ID" value="ACI21236"/>
    <property type="gene ID" value="THEYE_A0687"/>
</dbReference>
<dbReference type="KEGG" id="tye:THEYE_A0687"/>
<dbReference type="PATRIC" id="fig|289376.4.peg.680"/>
<dbReference type="eggNOG" id="COG0556">
    <property type="taxonomic scope" value="Bacteria"/>
</dbReference>
<dbReference type="HOGENOM" id="CLU_009621_2_1_0"/>
<dbReference type="InParanoid" id="B5YJW4"/>
<dbReference type="OrthoDB" id="9806651at2"/>
<dbReference type="Proteomes" id="UP000000718">
    <property type="component" value="Chromosome"/>
</dbReference>
<dbReference type="GO" id="GO:0005737">
    <property type="term" value="C:cytoplasm"/>
    <property type="evidence" value="ECO:0007669"/>
    <property type="project" value="UniProtKB-SubCell"/>
</dbReference>
<dbReference type="GO" id="GO:0009380">
    <property type="term" value="C:excinuclease repair complex"/>
    <property type="evidence" value="ECO:0000318"/>
    <property type="project" value="GO_Central"/>
</dbReference>
<dbReference type="GO" id="GO:0005524">
    <property type="term" value="F:ATP binding"/>
    <property type="evidence" value="ECO:0007669"/>
    <property type="project" value="UniProtKB-UniRule"/>
</dbReference>
<dbReference type="GO" id="GO:0016887">
    <property type="term" value="F:ATP hydrolysis activity"/>
    <property type="evidence" value="ECO:0007669"/>
    <property type="project" value="InterPro"/>
</dbReference>
<dbReference type="GO" id="GO:0003677">
    <property type="term" value="F:DNA binding"/>
    <property type="evidence" value="ECO:0007669"/>
    <property type="project" value="UniProtKB-UniRule"/>
</dbReference>
<dbReference type="GO" id="GO:0009381">
    <property type="term" value="F:excinuclease ABC activity"/>
    <property type="evidence" value="ECO:0007669"/>
    <property type="project" value="UniProtKB-UniRule"/>
</dbReference>
<dbReference type="GO" id="GO:0004386">
    <property type="term" value="F:helicase activity"/>
    <property type="evidence" value="ECO:0007669"/>
    <property type="project" value="UniProtKB-KW"/>
</dbReference>
<dbReference type="GO" id="GO:0000715">
    <property type="term" value="P:nucleotide-excision repair, DNA damage recognition"/>
    <property type="evidence" value="ECO:0000318"/>
    <property type="project" value="GO_Central"/>
</dbReference>
<dbReference type="GO" id="GO:0009432">
    <property type="term" value="P:SOS response"/>
    <property type="evidence" value="ECO:0007669"/>
    <property type="project" value="UniProtKB-UniRule"/>
</dbReference>
<dbReference type="CDD" id="cd17916">
    <property type="entry name" value="DEXHc_UvrB"/>
    <property type="match status" value="1"/>
</dbReference>
<dbReference type="CDD" id="cd18790">
    <property type="entry name" value="SF2_C_UvrB"/>
    <property type="match status" value="1"/>
</dbReference>
<dbReference type="Gene3D" id="3.40.50.300">
    <property type="entry name" value="P-loop containing nucleotide triphosphate hydrolases"/>
    <property type="match status" value="3"/>
</dbReference>
<dbReference type="Gene3D" id="4.10.860.10">
    <property type="entry name" value="UVR domain"/>
    <property type="match status" value="1"/>
</dbReference>
<dbReference type="HAMAP" id="MF_00204">
    <property type="entry name" value="UvrB"/>
    <property type="match status" value="1"/>
</dbReference>
<dbReference type="InterPro" id="IPR006935">
    <property type="entry name" value="Helicase/UvrB_N"/>
</dbReference>
<dbReference type="InterPro" id="IPR014001">
    <property type="entry name" value="Helicase_ATP-bd"/>
</dbReference>
<dbReference type="InterPro" id="IPR001650">
    <property type="entry name" value="Helicase_C-like"/>
</dbReference>
<dbReference type="InterPro" id="IPR027417">
    <property type="entry name" value="P-loop_NTPase"/>
</dbReference>
<dbReference type="InterPro" id="IPR001943">
    <property type="entry name" value="UVR_dom"/>
</dbReference>
<dbReference type="InterPro" id="IPR036876">
    <property type="entry name" value="UVR_dom_sf"/>
</dbReference>
<dbReference type="InterPro" id="IPR004807">
    <property type="entry name" value="UvrB"/>
</dbReference>
<dbReference type="InterPro" id="IPR041471">
    <property type="entry name" value="UvrB_inter"/>
</dbReference>
<dbReference type="InterPro" id="IPR024759">
    <property type="entry name" value="UvrB_YAD/RRR_dom"/>
</dbReference>
<dbReference type="NCBIfam" id="NF003673">
    <property type="entry name" value="PRK05298.1"/>
    <property type="match status" value="1"/>
</dbReference>
<dbReference type="NCBIfam" id="TIGR00631">
    <property type="entry name" value="uvrb"/>
    <property type="match status" value="1"/>
</dbReference>
<dbReference type="PANTHER" id="PTHR24029">
    <property type="entry name" value="UVRABC SYSTEM PROTEIN B"/>
    <property type="match status" value="1"/>
</dbReference>
<dbReference type="PANTHER" id="PTHR24029:SF0">
    <property type="entry name" value="UVRABC SYSTEM PROTEIN B"/>
    <property type="match status" value="1"/>
</dbReference>
<dbReference type="Pfam" id="PF00271">
    <property type="entry name" value="Helicase_C"/>
    <property type="match status" value="1"/>
</dbReference>
<dbReference type="Pfam" id="PF04851">
    <property type="entry name" value="ResIII"/>
    <property type="match status" value="1"/>
</dbReference>
<dbReference type="Pfam" id="PF02151">
    <property type="entry name" value="UVR"/>
    <property type="match status" value="1"/>
</dbReference>
<dbReference type="Pfam" id="PF12344">
    <property type="entry name" value="UvrB"/>
    <property type="match status" value="1"/>
</dbReference>
<dbReference type="Pfam" id="PF17757">
    <property type="entry name" value="UvrB_inter"/>
    <property type="match status" value="1"/>
</dbReference>
<dbReference type="SMART" id="SM00487">
    <property type="entry name" value="DEXDc"/>
    <property type="match status" value="1"/>
</dbReference>
<dbReference type="SMART" id="SM00490">
    <property type="entry name" value="HELICc"/>
    <property type="match status" value="1"/>
</dbReference>
<dbReference type="SUPFAM" id="SSF46600">
    <property type="entry name" value="C-terminal UvrC-binding domain of UvrB"/>
    <property type="match status" value="1"/>
</dbReference>
<dbReference type="SUPFAM" id="SSF52540">
    <property type="entry name" value="P-loop containing nucleoside triphosphate hydrolases"/>
    <property type="match status" value="2"/>
</dbReference>
<dbReference type="PROSITE" id="PS51192">
    <property type="entry name" value="HELICASE_ATP_BIND_1"/>
    <property type="match status" value="1"/>
</dbReference>
<dbReference type="PROSITE" id="PS51194">
    <property type="entry name" value="HELICASE_CTER"/>
    <property type="match status" value="1"/>
</dbReference>
<dbReference type="PROSITE" id="PS50151">
    <property type="entry name" value="UVR"/>
    <property type="match status" value="1"/>
</dbReference>
<proteinExistence type="inferred from homology"/>
<name>UVRB_THEYD</name>